<reference key="1">
    <citation type="journal article" date="2005" name="J. Bacteriol.">
        <title>The genome of Sulfolobus acidocaldarius, a model organism of the Crenarchaeota.</title>
        <authorList>
            <person name="Chen L."/>
            <person name="Bruegger K."/>
            <person name="Skovgaard M."/>
            <person name="Redder P."/>
            <person name="She Q."/>
            <person name="Torarinsson E."/>
            <person name="Greve B."/>
            <person name="Awayez M."/>
            <person name="Zibat A."/>
            <person name="Klenk H.-P."/>
            <person name="Garrett R.A."/>
        </authorList>
    </citation>
    <scope>NUCLEOTIDE SEQUENCE [LARGE SCALE GENOMIC DNA]</scope>
    <source>
        <strain>ATCC 33909 / DSM 639 / JCM 8929 / NBRC 15157 / NCIMB 11770</strain>
    </source>
</reference>
<keyword id="KW-0963">Cytoplasm</keyword>
<keyword id="KW-0324">Glycolysis</keyword>
<keyword id="KW-0456">Lyase</keyword>
<keyword id="KW-0460">Magnesium</keyword>
<keyword id="KW-0479">Metal-binding</keyword>
<keyword id="KW-1185">Reference proteome</keyword>
<keyword id="KW-0964">Secreted</keyword>
<feature type="chain" id="PRO_0000134034" description="Enolase">
    <location>
        <begin position="1"/>
        <end position="416"/>
    </location>
</feature>
<feature type="active site" description="Proton donor" evidence="1">
    <location>
        <position position="204"/>
    </location>
</feature>
<feature type="active site" description="Proton acceptor" evidence="1">
    <location>
        <position position="331"/>
    </location>
</feature>
<feature type="binding site" evidence="1">
    <location>
        <position position="160"/>
    </location>
    <ligand>
        <name>(2R)-2-phosphoglycerate</name>
        <dbReference type="ChEBI" id="CHEBI:58289"/>
    </ligand>
</feature>
<feature type="binding site" evidence="1">
    <location>
        <position position="239"/>
    </location>
    <ligand>
        <name>Mg(2+)</name>
        <dbReference type="ChEBI" id="CHEBI:18420"/>
    </ligand>
</feature>
<feature type="binding site" evidence="1">
    <location>
        <position position="280"/>
    </location>
    <ligand>
        <name>Mg(2+)</name>
        <dbReference type="ChEBI" id="CHEBI:18420"/>
    </ligand>
</feature>
<feature type="binding site" evidence="1">
    <location>
        <position position="306"/>
    </location>
    <ligand>
        <name>Mg(2+)</name>
        <dbReference type="ChEBI" id="CHEBI:18420"/>
    </ligand>
</feature>
<feature type="binding site" evidence="1">
    <location>
        <position position="331"/>
    </location>
    <ligand>
        <name>(2R)-2-phosphoglycerate</name>
        <dbReference type="ChEBI" id="CHEBI:58289"/>
    </ligand>
</feature>
<feature type="binding site" evidence="1">
    <location>
        <position position="360"/>
    </location>
    <ligand>
        <name>(2R)-2-phosphoglycerate</name>
        <dbReference type="ChEBI" id="CHEBI:58289"/>
    </ligand>
</feature>
<feature type="binding site" evidence="1">
    <location>
        <position position="361"/>
    </location>
    <ligand>
        <name>(2R)-2-phosphoglycerate</name>
        <dbReference type="ChEBI" id="CHEBI:58289"/>
    </ligand>
</feature>
<feature type="binding site" evidence="1">
    <location>
        <position position="382"/>
    </location>
    <ligand>
        <name>(2R)-2-phosphoglycerate</name>
        <dbReference type="ChEBI" id="CHEBI:58289"/>
    </ligand>
</feature>
<proteinExistence type="inferred from homology"/>
<name>ENO_SULAC</name>
<comment type="function">
    <text evidence="1">Catalyzes the reversible conversion of 2-phosphoglycerate (2-PG) into phosphoenolpyruvate (PEP). It is essential for the degradation of carbohydrates via glycolysis.</text>
</comment>
<comment type="catalytic activity">
    <reaction evidence="1">
        <text>(2R)-2-phosphoglycerate = phosphoenolpyruvate + H2O</text>
        <dbReference type="Rhea" id="RHEA:10164"/>
        <dbReference type="ChEBI" id="CHEBI:15377"/>
        <dbReference type="ChEBI" id="CHEBI:58289"/>
        <dbReference type="ChEBI" id="CHEBI:58702"/>
        <dbReference type="EC" id="4.2.1.11"/>
    </reaction>
</comment>
<comment type="cofactor">
    <cofactor evidence="1">
        <name>Mg(2+)</name>
        <dbReference type="ChEBI" id="CHEBI:18420"/>
    </cofactor>
    <text evidence="1">Binds a second Mg(2+) ion via substrate during catalysis.</text>
</comment>
<comment type="pathway">
    <text evidence="1">Carbohydrate degradation; glycolysis; pyruvate from D-glyceraldehyde 3-phosphate: step 4/5.</text>
</comment>
<comment type="subcellular location">
    <subcellularLocation>
        <location evidence="1">Cytoplasm</location>
    </subcellularLocation>
    <subcellularLocation>
        <location evidence="1">Secreted</location>
    </subcellularLocation>
    <subcellularLocation>
        <location evidence="1">Cell surface</location>
    </subcellularLocation>
    <text evidence="1">Fractions of enolase are present in both the cytoplasm and on the cell surface.</text>
</comment>
<comment type="similarity">
    <text evidence="1">Belongs to the enolase family.</text>
</comment>
<gene>
    <name evidence="1" type="primary">eno</name>
    <name type="ordered locus">Saci_1377</name>
</gene>
<dbReference type="EC" id="4.2.1.11" evidence="1"/>
<dbReference type="EMBL" id="CP000077">
    <property type="protein sequence ID" value="AAY80710.1"/>
    <property type="molecule type" value="Genomic_DNA"/>
</dbReference>
<dbReference type="RefSeq" id="WP_011278212.1">
    <property type="nucleotide sequence ID" value="NC_007181.1"/>
</dbReference>
<dbReference type="SMR" id="Q4J920"/>
<dbReference type="STRING" id="330779.Saci_1377"/>
<dbReference type="GeneID" id="14551878"/>
<dbReference type="GeneID" id="78441722"/>
<dbReference type="KEGG" id="sai:Saci_1377"/>
<dbReference type="PATRIC" id="fig|330779.12.peg.1329"/>
<dbReference type="eggNOG" id="arCOG01169">
    <property type="taxonomic scope" value="Archaea"/>
</dbReference>
<dbReference type="HOGENOM" id="CLU_031223_2_1_2"/>
<dbReference type="UniPathway" id="UPA00109">
    <property type="reaction ID" value="UER00187"/>
</dbReference>
<dbReference type="Proteomes" id="UP000001018">
    <property type="component" value="Chromosome"/>
</dbReference>
<dbReference type="GO" id="GO:0009986">
    <property type="term" value="C:cell surface"/>
    <property type="evidence" value="ECO:0007669"/>
    <property type="project" value="UniProtKB-SubCell"/>
</dbReference>
<dbReference type="GO" id="GO:0005576">
    <property type="term" value="C:extracellular region"/>
    <property type="evidence" value="ECO:0007669"/>
    <property type="project" value="UniProtKB-SubCell"/>
</dbReference>
<dbReference type="GO" id="GO:0000015">
    <property type="term" value="C:phosphopyruvate hydratase complex"/>
    <property type="evidence" value="ECO:0007669"/>
    <property type="project" value="InterPro"/>
</dbReference>
<dbReference type="GO" id="GO:0000287">
    <property type="term" value="F:magnesium ion binding"/>
    <property type="evidence" value="ECO:0007669"/>
    <property type="project" value="UniProtKB-UniRule"/>
</dbReference>
<dbReference type="GO" id="GO:0004634">
    <property type="term" value="F:phosphopyruvate hydratase activity"/>
    <property type="evidence" value="ECO:0007669"/>
    <property type="project" value="UniProtKB-UniRule"/>
</dbReference>
<dbReference type="GO" id="GO:0006096">
    <property type="term" value="P:glycolytic process"/>
    <property type="evidence" value="ECO:0007669"/>
    <property type="project" value="UniProtKB-UniRule"/>
</dbReference>
<dbReference type="CDD" id="cd03313">
    <property type="entry name" value="enolase"/>
    <property type="match status" value="1"/>
</dbReference>
<dbReference type="Gene3D" id="3.20.20.120">
    <property type="entry name" value="Enolase-like C-terminal domain"/>
    <property type="match status" value="1"/>
</dbReference>
<dbReference type="Gene3D" id="3.30.390.10">
    <property type="entry name" value="Enolase-like, N-terminal domain"/>
    <property type="match status" value="1"/>
</dbReference>
<dbReference type="HAMAP" id="MF_00318">
    <property type="entry name" value="Enolase"/>
    <property type="match status" value="1"/>
</dbReference>
<dbReference type="InterPro" id="IPR000941">
    <property type="entry name" value="Enolase"/>
</dbReference>
<dbReference type="InterPro" id="IPR036849">
    <property type="entry name" value="Enolase-like_C_sf"/>
</dbReference>
<dbReference type="InterPro" id="IPR029017">
    <property type="entry name" value="Enolase-like_N"/>
</dbReference>
<dbReference type="InterPro" id="IPR020810">
    <property type="entry name" value="Enolase_C"/>
</dbReference>
<dbReference type="InterPro" id="IPR020809">
    <property type="entry name" value="Enolase_CS"/>
</dbReference>
<dbReference type="InterPro" id="IPR020811">
    <property type="entry name" value="Enolase_N"/>
</dbReference>
<dbReference type="NCBIfam" id="TIGR01060">
    <property type="entry name" value="eno"/>
    <property type="match status" value="1"/>
</dbReference>
<dbReference type="PANTHER" id="PTHR11902">
    <property type="entry name" value="ENOLASE"/>
    <property type="match status" value="1"/>
</dbReference>
<dbReference type="PANTHER" id="PTHR11902:SF1">
    <property type="entry name" value="ENOLASE"/>
    <property type="match status" value="1"/>
</dbReference>
<dbReference type="Pfam" id="PF00113">
    <property type="entry name" value="Enolase_C"/>
    <property type="match status" value="1"/>
</dbReference>
<dbReference type="Pfam" id="PF03952">
    <property type="entry name" value="Enolase_N"/>
    <property type="match status" value="1"/>
</dbReference>
<dbReference type="PIRSF" id="PIRSF001400">
    <property type="entry name" value="Enolase"/>
    <property type="match status" value="1"/>
</dbReference>
<dbReference type="PRINTS" id="PR00148">
    <property type="entry name" value="ENOLASE"/>
</dbReference>
<dbReference type="SFLD" id="SFLDS00001">
    <property type="entry name" value="Enolase"/>
    <property type="match status" value="1"/>
</dbReference>
<dbReference type="SFLD" id="SFLDF00002">
    <property type="entry name" value="enolase"/>
    <property type="match status" value="1"/>
</dbReference>
<dbReference type="SMART" id="SM01192">
    <property type="entry name" value="Enolase_C"/>
    <property type="match status" value="1"/>
</dbReference>
<dbReference type="SMART" id="SM01193">
    <property type="entry name" value="Enolase_N"/>
    <property type="match status" value="1"/>
</dbReference>
<dbReference type="SUPFAM" id="SSF51604">
    <property type="entry name" value="Enolase C-terminal domain-like"/>
    <property type="match status" value="1"/>
</dbReference>
<dbReference type="SUPFAM" id="SSF54826">
    <property type="entry name" value="Enolase N-terminal domain-like"/>
    <property type="match status" value="1"/>
</dbReference>
<dbReference type="PROSITE" id="PS00164">
    <property type="entry name" value="ENOLASE"/>
    <property type="match status" value="1"/>
</dbReference>
<evidence type="ECO:0000255" key="1">
    <source>
        <dbReference type="HAMAP-Rule" id="MF_00318"/>
    </source>
</evidence>
<accession>Q4J920</accession>
<sequence length="416" mass="46954">MNDRFRIRKLKGYEIIDSRANRTIRVRVETYDGIVGFGDAPAGASKGANEAVELKDKNGRVIDAVELVNTVLSDSLKDYDVRRQRVIDTTLIRLDGTQNKSRIGGNTMIATSIAVLKTASRALGQEYFEYIGGPRAKYIPMPLLNILNGGLHAGNNLKIQEFIIIPKNFDKFTEAIQASIEVYKRLKDLITERYGKIYTALGDEGGFSPPLEKTMDALDLVYTSIKSLGYEDKIFMGMDAAASNFFHESHYELDGKRYTAGELIDYYKQLADMYPLMYIEDPFEENDYDSFSQLQSKLKKTIVTGDDLYVTNIEYLKKGIERMSSKGTIVKPNQIGTITETLDYIDFARRNAVKTIVSHRSGETEDSIIADLAVGTQSEFIKTGAPSRGERTSKYNRLIEIELDYGLEFYGKNFYL</sequence>
<protein>
    <recommendedName>
        <fullName evidence="1">Enolase</fullName>
        <ecNumber evidence="1">4.2.1.11</ecNumber>
    </recommendedName>
    <alternativeName>
        <fullName evidence="1">2-phospho-D-glycerate hydro-lyase</fullName>
    </alternativeName>
    <alternativeName>
        <fullName evidence="1">2-phosphoglycerate dehydratase</fullName>
    </alternativeName>
</protein>
<organism>
    <name type="scientific">Sulfolobus acidocaldarius (strain ATCC 33909 / DSM 639 / JCM 8929 / NBRC 15157 / NCIMB 11770)</name>
    <dbReference type="NCBI Taxonomy" id="330779"/>
    <lineage>
        <taxon>Archaea</taxon>
        <taxon>Thermoproteota</taxon>
        <taxon>Thermoprotei</taxon>
        <taxon>Sulfolobales</taxon>
        <taxon>Sulfolobaceae</taxon>
        <taxon>Sulfolobus</taxon>
    </lineage>
</organism>